<protein>
    <recommendedName>
        <fullName evidence="4 5 6">Conotoxin mr3a</fullName>
    </recommendedName>
</protein>
<organism>
    <name type="scientific">Conus marmoreus</name>
    <name type="common">Marble cone</name>
    <dbReference type="NCBI Taxonomy" id="42752"/>
    <lineage>
        <taxon>Eukaryota</taxon>
        <taxon>Metazoa</taxon>
        <taxon>Spiralia</taxon>
        <taxon>Lophotrochozoa</taxon>
        <taxon>Mollusca</taxon>
        <taxon>Gastropoda</taxon>
        <taxon>Caenogastropoda</taxon>
        <taxon>Neogastropoda</taxon>
        <taxon>Conoidea</taxon>
        <taxon>Conidae</taxon>
        <taxon>Conus</taxon>
    </lineage>
</organism>
<keyword id="KW-0903">Direct protein sequencing</keyword>
<keyword id="KW-1015">Disulfide bond</keyword>
<keyword id="KW-0379">Hydroxylation</keyword>
<keyword id="KW-0528">Neurotoxin</keyword>
<keyword id="KW-0964">Secreted</keyword>
<keyword id="KW-0800">Toxin</keyword>
<name>M3A_CONMR</name>
<reference key="1">
    <citation type="journal article" date="2004" name="Biochemistry">
        <title>Three-dimensional structure of the mini-M conotoxin mr3a.</title>
        <authorList>
            <person name="McDougal O.M."/>
            <person name="Poulter C.D."/>
        </authorList>
    </citation>
    <scope>PROTEIN SEQUENCE</scope>
    <scope>STRUCTURE BY NMR</scope>
    <scope>DISULFIDE BONDS</scope>
    <scope>SUBCELLULAR LOCATION</scope>
</reference>
<reference key="2">
    <citation type="journal article" date="2005" name="Biochemistry">
        <title>Definition of the M-conotoxin superfamily: characterization of novel peptides from molluscivorous Conus venoms.</title>
        <authorList>
            <person name="Corpuz G.P."/>
            <person name="Jacobsen R.B."/>
            <person name="Jimenez E.C."/>
            <person name="Watkins M."/>
            <person name="Walker C."/>
            <person name="Colledge C."/>
            <person name="Garrett J.E."/>
            <person name="McDougal O."/>
            <person name="Li W."/>
            <person name="Gray W.R."/>
            <person name="Hillyard D.R."/>
            <person name="Rivier J."/>
            <person name="McIntosh J.M."/>
            <person name="Cruz L.J."/>
            <person name="Olivera B.M."/>
        </authorList>
    </citation>
    <scope>PROTEIN SEQUENCE</scope>
    <scope>SYNTHESIS</scope>
    <scope>DISULFIDE BONDS</scope>
    <scope>MASS SPECTROMETRY</scope>
    <scope>HYDROXYLATION AT PRO-14</scope>
    <scope>BIOASSAY</scope>
    <source>
        <tissue>Venom</tissue>
    </source>
</reference>
<reference key="3">
    <citation type="journal article" date="2006" name="FEBS J.">
        <title>Characterization of novel M-superfamily conotoxins with new disulfide linkage.</title>
        <authorList>
            <person name="Han Y.-H."/>
            <person name="Wang Q."/>
            <person name="Jiang H."/>
            <person name="Liu L."/>
            <person name="Xiao C."/>
            <person name="Yuan D.-D."/>
            <person name="Shao X.-X."/>
            <person name="Dai Q.-Y."/>
            <person name="Cheng J.-S."/>
            <person name="Chi C.-W."/>
        </authorList>
    </citation>
    <scope>PROTEIN SEQUENCE</scope>
    <scope>MASS SPECTROMETRY</scope>
    <scope>BIOASSAY</scope>
    <source>
        <tissue>Venom</tissue>
    </source>
</reference>
<sequence>GCCGSFACRFGCVPCCV</sequence>
<accession>P0C1M9</accession>
<feature type="peptide" id="PRO_0000246037" description="Conotoxin mr3a" evidence="1 2 3">
    <location>
        <begin position="1"/>
        <end position="17"/>
    </location>
</feature>
<feature type="modified residue" description="4-hydroxyproline" evidence="2">
    <location>
        <position position="14"/>
    </location>
</feature>
<feature type="disulfide bond" evidence="1 2">
    <location>
        <begin position="2"/>
        <end position="16"/>
    </location>
</feature>
<feature type="disulfide bond" evidence="1 2">
    <location>
        <begin position="3"/>
        <end position="12"/>
    </location>
</feature>
<feature type="disulfide bond" evidence="1 2">
    <location>
        <begin position="8"/>
        <end position="15"/>
    </location>
</feature>
<dbReference type="ConoServer" id="1422">
    <property type="toxin name" value="MrIIIA"/>
</dbReference>
<dbReference type="GO" id="GO:0005576">
    <property type="term" value="C:extracellular region"/>
    <property type="evidence" value="ECO:0007669"/>
    <property type="project" value="UniProtKB-SubCell"/>
</dbReference>
<dbReference type="GO" id="GO:0090729">
    <property type="term" value="F:toxin activity"/>
    <property type="evidence" value="ECO:0007669"/>
    <property type="project" value="UniProtKB-KW"/>
</dbReference>
<comment type="function">
    <text evidence="2 3">Intracranial injection into mice causes circular motion, barrel rolling and convulsions.</text>
</comment>
<comment type="subcellular location">
    <subcellularLocation>
        <location evidence="1">Secreted</location>
    </subcellularLocation>
</comment>
<comment type="tissue specificity">
    <text evidence="8">Expressed by the venom duct.</text>
</comment>
<comment type="domain">
    <text evidence="7">The cysteine framework is III (CC-C-C-CC). Classified in the M-2 branch, since 2 residues stand between the fourth and the fifth cysteine residues.</text>
</comment>
<comment type="mass spectrometry"/>
<comment type="mass spectrometry">
    <text>Without hydroxyPro-14.</text>
</comment>
<comment type="similarity">
    <text evidence="7">Belongs to the conotoxin M superfamily.</text>
</comment>
<proteinExistence type="evidence at protein level"/>
<evidence type="ECO:0000269" key="1">
    <source>
    </source>
</evidence>
<evidence type="ECO:0000269" key="2">
    <source>
    </source>
</evidence>
<evidence type="ECO:0000269" key="3">
    <source>
    </source>
</evidence>
<evidence type="ECO:0000303" key="4">
    <source>
    </source>
</evidence>
<evidence type="ECO:0000303" key="5">
    <source>
    </source>
</evidence>
<evidence type="ECO:0000303" key="6">
    <source>
    </source>
</evidence>
<evidence type="ECO:0000305" key="7"/>
<evidence type="ECO:0000305" key="8">
    <source>
    </source>
</evidence>